<keyword id="KW-0067">ATP-binding</keyword>
<keyword id="KW-0963">Cytoplasm</keyword>
<keyword id="KW-0238">DNA-binding</keyword>
<keyword id="KW-0413">Isomerase</keyword>
<keyword id="KW-0547">Nucleotide-binding</keyword>
<keyword id="KW-1185">Reference proteome</keyword>
<keyword id="KW-0799">Topoisomerase</keyword>
<proteinExistence type="inferred from homology"/>
<name>GYRA_MYCGE</name>
<reference key="1">
    <citation type="journal article" date="1994" name="J. Bacteriol.">
        <title>An unusual gene containing a dnaJ N-terminal box flanks the putative origin of replication of Mycoplasma genitalium.</title>
        <authorList>
            <person name="Bailey C.C."/>
            <person name="Bott K.F."/>
        </authorList>
    </citation>
    <scope>NUCLEOTIDE SEQUENCE [GENOMIC DNA]</scope>
    <source>
        <strain>ATCC 33530 / DSM 19775 / NCTC 10195 / G37</strain>
    </source>
</reference>
<reference key="2">
    <citation type="journal article" date="1995" name="Science">
        <title>The minimal gene complement of Mycoplasma genitalium.</title>
        <authorList>
            <person name="Fraser C.M."/>
            <person name="Gocayne J.D."/>
            <person name="White O."/>
            <person name="Adams M.D."/>
            <person name="Clayton R.A."/>
            <person name="Fleischmann R.D."/>
            <person name="Bult C.J."/>
            <person name="Kerlavage A.R."/>
            <person name="Sutton G.G."/>
            <person name="Kelley J.M."/>
            <person name="Fritchman J.L."/>
            <person name="Weidman J.F."/>
            <person name="Small K.V."/>
            <person name="Sandusky M."/>
            <person name="Fuhrmann J.L."/>
            <person name="Nguyen D.T."/>
            <person name="Utterback T.R."/>
            <person name="Saudek D.M."/>
            <person name="Phillips C.A."/>
            <person name="Merrick J.M."/>
            <person name="Tomb J.-F."/>
            <person name="Dougherty B.A."/>
            <person name="Bott K.F."/>
            <person name="Hu P.-C."/>
            <person name="Lucier T.S."/>
            <person name="Peterson S.N."/>
            <person name="Smith H.O."/>
            <person name="Hutchison C.A. III"/>
            <person name="Venter J.C."/>
        </authorList>
    </citation>
    <scope>NUCLEOTIDE SEQUENCE [LARGE SCALE GENOMIC DNA]</scope>
    <source>
        <strain>ATCC 33530 / DSM 19775 / NCTC 10195 / G37</strain>
    </source>
</reference>
<reference key="3">
    <citation type="journal article" date="1993" name="J. Bacteriol.">
        <title>A survey of the Mycoplasma genitalium genome by using random sequencing.</title>
        <authorList>
            <person name="Peterson S.N."/>
            <person name="Hu P.-C."/>
            <person name="Bott K.F."/>
            <person name="Hutchison C.A. III"/>
        </authorList>
    </citation>
    <scope>NUCLEOTIDE SEQUENCE [GENOMIC DNA] OF 1-77 AND 205-302</scope>
    <source>
        <strain>ATCC 33530 / DSM 19775 / NCTC 10195 / G37</strain>
    </source>
</reference>
<reference key="4">
    <citation type="journal article" date="1991" name="Nucleic Acids Res.">
        <title>A random sequencing approach for placing markers on the physical map of Mycoplasma genitalium.</title>
        <authorList>
            <person name="Peterson S.N."/>
            <person name="Schramm N."/>
            <person name="Hu P.-C."/>
            <person name="Bott K.F."/>
            <person name="Hutchison C.A. III"/>
        </authorList>
    </citation>
    <scope>NUCLEOTIDE SEQUENCE [GENOMIC DNA] OF 509-639</scope>
    <source>
        <strain>ATCC 33530 / DSM 19775 / NCTC 10195 / G37</strain>
    </source>
</reference>
<evidence type="ECO:0000255" key="1">
    <source>
        <dbReference type="HAMAP-Rule" id="MF_01897"/>
    </source>
</evidence>
<evidence type="ECO:0000255" key="2">
    <source>
        <dbReference type="PROSITE-ProRule" id="PRU01384"/>
    </source>
</evidence>
<evidence type="ECO:0000305" key="3"/>
<organism>
    <name type="scientific">Mycoplasma genitalium (strain ATCC 33530 / DSM 19775 / NCTC 10195 / G37)</name>
    <name type="common">Mycoplasmoides genitalium</name>
    <dbReference type="NCBI Taxonomy" id="243273"/>
    <lineage>
        <taxon>Bacteria</taxon>
        <taxon>Bacillati</taxon>
        <taxon>Mycoplasmatota</taxon>
        <taxon>Mycoplasmoidales</taxon>
        <taxon>Mycoplasmoidaceae</taxon>
        <taxon>Mycoplasmoides</taxon>
    </lineage>
</organism>
<protein>
    <recommendedName>
        <fullName evidence="1">DNA gyrase subunit A</fullName>
        <ecNumber evidence="1">5.6.2.2</ecNumber>
    </recommendedName>
</protein>
<comment type="function">
    <text evidence="1">A type II topoisomerase that negatively supercoils closed circular double-stranded (ds) DNA in an ATP-dependent manner to modulate DNA topology and maintain chromosomes in an underwound state. Negative supercoiling favors strand separation, and DNA replication, transcription, recombination and repair, all of which involve strand separation. Also able to catalyze the interconversion of other topological isomers of dsDNA rings, including catenanes and knotted rings. Type II topoisomerases break and join 2 DNA strands simultaneously in an ATP-dependent manner.</text>
</comment>
<comment type="catalytic activity">
    <reaction evidence="1">
        <text>ATP-dependent breakage, passage and rejoining of double-stranded DNA.</text>
        <dbReference type="EC" id="5.6.2.2"/>
    </reaction>
</comment>
<comment type="subunit">
    <text evidence="1">Heterotetramer, composed of two GyrA and two GyrB chains. In the heterotetramer, GyrA contains the active site tyrosine that forms a transient covalent intermediate with DNA, while GyrB binds cofactors and catalyzes ATP hydrolysis.</text>
</comment>
<comment type="subcellular location">
    <subcellularLocation>
        <location evidence="1">Cytoplasm</location>
    </subcellularLocation>
</comment>
<comment type="miscellaneous">
    <text evidence="1">Few gyrases are as efficient as E.coli at forming negative supercoils. Not all organisms have 2 type II topoisomerases; in organisms with a single type II topoisomerase this enzyme also has to decatenate newly replicated chromosomes.</text>
</comment>
<comment type="similarity">
    <text evidence="1">Belongs to the type II topoisomerase GyrA/ParC subunit family.</text>
</comment>
<sequence length="836" mass="93682">MAKQQDQVDKIRENLDNSTVKSISLANELERSFMEYAMSVIVARALPDARDGLKPVHRRVLYGAYIGGMHHDRPFKKSARIVGDVMSKFHPHGDMAIYDTMSRMAQDFSLRYLLIDGHGNFGSIDGDRPAAQRYTEARLSKLAAELLKDIDKDTVDFIANYDGEEKEPTVLPAAFPNLLANGSSGIAVGMSTSIPSHNLSELIAGLIMLIDNPQCTFQELLTVIKGPDFPTGANIIYTKGIESYFETGKGNVVIRSKVEIEQLQTRSALVVTEIPYMVNKTTLIEKIVELVKAEEISGIADIRDESSREGIRLVIEVKRDTVPEVLLNQLFKSTRLQVRFPVNMLALVKGAPVLLNMKQALEVYLDHQIDVLVRKTKFVLNKQQERYHILSGLLIAALNIDEVVAIIKKSANNQEAINTLNTKFKLDEIQAKAVLDMRLRSLSVLEVNKLQTEQKELKDSIEFCKKVLADQKLQLKIIKEELQKINDQFGDERRSEILYDISEEIDDESLIKVENVVITMSTNGYLKRIGVDAYNLQHRGGVGVKGLTTYVDDSISQLLVCSTHSDLLFFTDKGKVYRIRAHQIPYGFRTNKGIPAVNLIKIEKDERICSLLSVNNYDDGYFFFCTKNGIVKRTSLNEFINILSNGKRAISFDDNDTLYSVIKTHGNDEIFIGSTNGFVVRFHENQLRVLSRTARGVFGISLNKGEFVNGLSTSSNGSLLLSVGQNGIGKLTSIDKYRLTKRNAKGVKTLRVTDRTGPVVTTTTVFGNEDLLMISSAGKIVRTSLQELSEQGKNTSGVKLIRLKDNERLERVTIFKEELEDKEMQLEDVGSKQITQ</sequence>
<feature type="chain" id="PRO_0000145240" description="DNA gyrase subunit A">
    <location>
        <begin position="1"/>
        <end position="836"/>
    </location>
</feature>
<feature type="domain" description="Topo IIA-type catalytic" evidence="2">
    <location>
        <begin position="46"/>
        <end position="510"/>
    </location>
</feature>
<feature type="short sequence motif" description="GyrA-box" evidence="1">
    <location>
        <begin position="537"/>
        <end position="543"/>
    </location>
</feature>
<feature type="active site" description="O-(5'-phospho-DNA)-tyrosine intermediate" evidence="1">
    <location>
        <position position="134"/>
    </location>
</feature>
<feature type="sequence conflict" description="In Ref. 3; AAD12504." evidence="3" ref="3">
    <original>GMHHDRPFK</original>
    <variation>WSCTMIVLL</variation>
    <location>
        <begin position="68"/>
        <end position="76"/>
    </location>
</feature>
<feature type="sequence conflict" description="In Ref. 1; AAA57072." evidence="3" ref="1">
    <original>R</original>
    <variation>L</variation>
    <location>
        <position position="648"/>
    </location>
</feature>
<accession>P47250</accession>
<accession>Q49325</accession>
<dbReference type="EC" id="5.6.2.2" evidence="1"/>
<dbReference type="EMBL" id="U09251">
    <property type="protein sequence ID" value="AAA57072.1"/>
    <property type="molecule type" value="Genomic_DNA"/>
</dbReference>
<dbReference type="EMBL" id="L43967">
    <property type="protein sequence ID" value="AAC71220.1"/>
    <property type="molecule type" value="Genomic_DNA"/>
</dbReference>
<dbReference type="EMBL" id="U02211">
    <property type="protein sequence ID" value="AAD12504.1"/>
    <property type="molecule type" value="Genomic_DNA"/>
</dbReference>
<dbReference type="EMBL" id="U01696">
    <property type="protein sequence ID" value="AAB01009.1"/>
    <property type="molecule type" value="Genomic_DNA"/>
</dbReference>
<dbReference type="EMBL" id="X61533">
    <property type="protein sequence ID" value="CAA43745.1"/>
    <property type="molecule type" value="Genomic_DNA"/>
</dbReference>
<dbReference type="PIR" id="D64200">
    <property type="entry name" value="D64200"/>
</dbReference>
<dbReference type="RefSeq" id="WP_009885559.1">
    <property type="nucleotide sequence ID" value="NC_000908.2"/>
</dbReference>
<dbReference type="SMR" id="P47250"/>
<dbReference type="FunCoup" id="P47250">
    <property type="interactions" value="172"/>
</dbReference>
<dbReference type="STRING" id="243273.MG_004"/>
<dbReference type="GeneID" id="88282119"/>
<dbReference type="KEGG" id="mge:MG_004"/>
<dbReference type="eggNOG" id="COG0188">
    <property type="taxonomic scope" value="Bacteria"/>
</dbReference>
<dbReference type="HOGENOM" id="CLU_002977_6_1_14"/>
<dbReference type="InParanoid" id="P47250"/>
<dbReference type="OrthoDB" id="9806486at2"/>
<dbReference type="BioCyc" id="MGEN243273:G1GJ2-4-MONOMER"/>
<dbReference type="Proteomes" id="UP000000807">
    <property type="component" value="Chromosome"/>
</dbReference>
<dbReference type="GO" id="GO:0005694">
    <property type="term" value="C:chromosome"/>
    <property type="evidence" value="ECO:0007669"/>
    <property type="project" value="InterPro"/>
</dbReference>
<dbReference type="GO" id="GO:0005737">
    <property type="term" value="C:cytoplasm"/>
    <property type="evidence" value="ECO:0000318"/>
    <property type="project" value="GO_Central"/>
</dbReference>
<dbReference type="GO" id="GO:0009330">
    <property type="term" value="C:DNA topoisomerase type II (double strand cut, ATP-hydrolyzing) complex"/>
    <property type="evidence" value="ECO:0000318"/>
    <property type="project" value="GO_Central"/>
</dbReference>
<dbReference type="GO" id="GO:0005524">
    <property type="term" value="F:ATP binding"/>
    <property type="evidence" value="ECO:0000318"/>
    <property type="project" value="GO_Central"/>
</dbReference>
<dbReference type="GO" id="GO:0003677">
    <property type="term" value="F:DNA binding"/>
    <property type="evidence" value="ECO:0000318"/>
    <property type="project" value="GO_Central"/>
</dbReference>
<dbReference type="GO" id="GO:0034335">
    <property type="term" value="F:DNA negative supercoiling activity"/>
    <property type="evidence" value="ECO:0007669"/>
    <property type="project" value="UniProtKB-ARBA"/>
</dbReference>
<dbReference type="GO" id="GO:0006265">
    <property type="term" value="P:DNA topological change"/>
    <property type="evidence" value="ECO:0000318"/>
    <property type="project" value="GO_Central"/>
</dbReference>
<dbReference type="GO" id="GO:0006261">
    <property type="term" value="P:DNA-templated DNA replication"/>
    <property type="evidence" value="ECO:0007669"/>
    <property type="project" value="UniProtKB-UniRule"/>
</dbReference>
<dbReference type="CDD" id="cd00187">
    <property type="entry name" value="TOP4c"/>
    <property type="match status" value="1"/>
</dbReference>
<dbReference type="FunFam" id="1.10.268.10:FF:000001">
    <property type="entry name" value="DNA gyrase subunit A"/>
    <property type="match status" value="1"/>
</dbReference>
<dbReference type="FunFam" id="3.30.1360.40:FF:000002">
    <property type="entry name" value="DNA gyrase subunit A"/>
    <property type="match status" value="1"/>
</dbReference>
<dbReference type="FunFam" id="2.120.10.90:FF:000005">
    <property type="entry name" value="DNA topoisomerase 4 subunit A"/>
    <property type="match status" value="1"/>
</dbReference>
<dbReference type="Gene3D" id="3.30.1360.40">
    <property type="match status" value="1"/>
</dbReference>
<dbReference type="Gene3D" id="2.120.10.90">
    <property type="entry name" value="DNA gyrase/topoisomerase IV, subunit A, C-terminal"/>
    <property type="match status" value="1"/>
</dbReference>
<dbReference type="Gene3D" id="3.90.199.10">
    <property type="entry name" value="Topoisomerase II, domain 5"/>
    <property type="match status" value="1"/>
</dbReference>
<dbReference type="Gene3D" id="1.10.268.10">
    <property type="entry name" value="Topoisomerase, domain 3"/>
    <property type="match status" value="1"/>
</dbReference>
<dbReference type="HAMAP" id="MF_01897">
    <property type="entry name" value="GyrA"/>
    <property type="match status" value="1"/>
</dbReference>
<dbReference type="InterPro" id="IPR005743">
    <property type="entry name" value="GyrA"/>
</dbReference>
<dbReference type="InterPro" id="IPR006691">
    <property type="entry name" value="GyrA/parC_rep"/>
</dbReference>
<dbReference type="InterPro" id="IPR035516">
    <property type="entry name" value="Gyrase/topoIV_suA_C"/>
</dbReference>
<dbReference type="InterPro" id="IPR013760">
    <property type="entry name" value="Topo_IIA-like_dom_sf"/>
</dbReference>
<dbReference type="InterPro" id="IPR013758">
    <property type="entry name" value="Topo_IIA_A/C_ab"/>
</dbReference>
<dbReference type="InterPro" id="IPR013757">
    <property type="entry name" value="Topo_IIA_A_a_sf"/>
</dbReference>
<dbReference type="InterPro" id="IPR002205">
    <property type="entry name" value="Topo_IIA_dom_A"/>
</dbReference>
<dbReference type="InterPro" id="IPR050220">
    <property type="entry name" value="Type_II_DNA_Topoisomerases"/>
</dbReference>
<dbReference type="NCBIfam" id="TIGR01063">
    <property type="entry name" value="gyrA"/>
    <property type="match status" value="1"/>
</dbReference>
<dbReference type="NCBIfam" id="NF004043">
    <property type="entry name" value="PRK05560.1"/>
    <property type="match status" value="1"/>
</dbReference>
<dbReference type="NCBIfam" id="NF004044">
    <property type="entry name" value="PRK05561.1"/>
    <property type="match status" value="1"/>
</dbReference>
<dbReference type="PANTHER" id="PTHR43493:SF5">
    <property type="entry name" value="DNA GYRASE SUBUNIT A, CHLOROPLASTIC_MITOCHONDRIAL"/>
    <property type="match status" value="1"/>
</dbReference>
<dbReference type="PANTHER" id="PTHR43493">
    <property type="entry name" value="DNA GYRASE/TOPOISOMERASE SUBUNIT A"/>
    <property type="match status" value="1"/>
</dbReference>
<dbReference type="Pfam" id="PF03989">
    <property type="entry name" value="DNA_gyraseA_C"/>
    <property type="match status" value="6"/>
</dbReference>
<dbReference type="Pfam" id="PF00521">
    <property type="entry name" value="DNA_topoisoIV"/>
    <property type="match status" value="1"/>
</dbReference>
<dbReference type="SMART" id="SM00434">
    <property type="entry name" value="TOP4c"/>
    <property type="match status" value="1"/>
</dbReference>
<dbReference type="SUPFAM" id="SSF101904">
    <property type="entry name" value="GyrA/ParC C-terminal domain-like"/>
    <property type="match status" value="1"/>
</dbReference>
<dbReference type="SUPFAM" id="SSF56719">
    <property type="entry name" value="Type II DNA topoisomerase"/>
    <property type="match status" value="1"/>
</dbReference>
<dbReference type="PROSITE" id="PS52040">
    <property type="entry name" value="TOPO_IIA"/>
    <property type="match status" value="1"/>
</dbReference>
<gene>
    <name evidence="1" type="primary">gyrA</name>
    <name type="ordered locus">MG004</name>
</gene>